<sequence length="279" mass="31394">MKVISSIQELRDQLRGQNRTAFVPTMGNLHEGHLSLMRLARQHGDPVVASIFVNRLQFGPNEDFDKYPRTLQDDIEKLQKENVYVLFAPTERDMYPEPQEYRVLPPDDLGGILEGEFRPGFFAGVCTVVTKLMSCVQPRVAVFGKKDYQQLMIVRRMCQQLALPVDIIAAETVRDEDGLALSSRNRYLTTDERKEAPELAKTLQRVRDGVLGGERDLGKLEQTARTHLAERGWAPDYISIRRRANLIAPSAAELEAGEPLVVLAAAKLGATRLIDNLEI</sequence>
<comment type="function">
    <text evidence="1">Catalyzes the condensation of pantoate with beta-alanine in an ATP-dependent reaction via a pantoyl-adenylate intermediate.</text>
</comment>
<comment type="catalytic activity">
    <reaction evidence="1">
        <text>(R)-pantoate + beta-alanine + ATP = (R)-pantothenate + AMP + diphosphate + H(+)</text>
        <dbReference type="Rhea" id="RHEA:10912"/>
        <dbReference type="ChEBI" id="CHEBI:15378"/>
        <dbReference type="ChEBI" id="CHEBI:15980"/>
        <dbReference type="ChEBI" id="CHEBI:29032"/>
        <dbReference type="ChEBI" id="CHEBI:30616"/>
        <dbReference type="ChEBI" id="CHEBI:33019"/>
        <dbReference type="ChEBI" id="CHEBI:57966"/>
        <dbReference type="ChEBI" id="CHEBI:456215"/>
        <dbReference type="EC" id="6.3.2.1"/>
    </reaction>
</comment>
<comment type="pathway">
    <text evidence="1">Cofactor biosynthesis; (R)-pantothenate biosynthesis; (R)-pantothenate from (R)-pantoate and beta-alanine: step 1/1.</text>
</comment>
<comment type="subunit">
    <text evidence="1">Homodimer.</text>
</comment>
<comment type="subcellular location">
    <subcellularLocation>
        <location evidence="1">Cytoplasm</location>
    </subcellularLocation>
</comment>
<comment type="miscellaneous">
    <text evidence="1">The reaction proceeds by a bi uni uni bi ping pong mechanism.</text>
</comment>
<comment type="similarity">
    <text evidence="1">Belongs to the pantothenate synthetase family.</text>
</comment>
<name>PANC_BURA4</name>
<accession>B1YUT9</accession>
<feature type="chain" id="PRO_1000097033" description="Pantothenate synthetase">
    <location>
        <begin position="1"/>
        <end position="279"/>
    </location>
</feature>
<feature type="active site" description="Proton donor" evidence="1">
    <location>
        <position position="33"/>
    </location>
</feature>
<feature type="binding site" evidence="1">
    <location>
        <begin position="26"/>
        <end position="33"/>
    </location>
    <ligand>
        <name>ATP</name>
        <dbReference type="ChEBI" id="CHEBI:30616"/>
    </ligand>
</feature>
<feature type="binding site" evidence="1">
    <location>
        <position position="57"/>
    </location>
    <ligand>
        <name>(R)-pantoate</name>
        <dbReference type="ChEBI" id="CHEBI:15980"/>
    </ligand>
</feature>
<feature type="binding site" evidence="1">
    <location>
        <position position="57"/>
    </location>
    <ligand>
        <name>beta-alanine</name>
        <dbReference type="ChEBI" id="CHEBI:57966"/>
    </ligand>
</feature>
<feature type="binding site" evidence="1">
    <location>
        <begin position="144"/>
        <end position="147"/>
    </location>
    <ligand>
        <name>ATP</name>
        <dbReference type="ChEBI" id="CHEBI:30616"/>
    </ligand>
</feature>
<feature type="binding site" evidence="1">
    <location>
        <position position="150"/>
    </location>
    <ligand>
        <name>(R)-pantoate</name>
        <dbReference type="ChEBI" id="CHEBI:15980"/>
    </ligand>
</feature>
<feature type="binding site" evidence="1">
    <location>
        <position position="173"/>
    </location>
    <ligand>
        <name>ATP</name>
        <dbReference type="ChEBI" id="CHEBI:30616"/>
    </ligand>
</feature>
<feature type="binding site" evidence="1">
    <location>
        <begin position="181"/>
        <end position="184"/>
    </location>
    <ligand>
        <name>ATP</name>
        <dbReference type="ChEBI" id="CHEBI:30616"/>
    </ligand>
</feature>
<dbReference type="EC" id="6.3.2.1" evidence="1"/>
<dbReference type="EMBL" id="CP001025">
    <property type="protein sequence ID" value="ACB64835.1"/>
    <property type="molecule type" value="Genomic_DNA"/>
</dbReference>
<dbReference type="RefSeq" id="WP_012364461.1">
    <property type="nucleotide sequence ID" value="NC_010551.1"/>
</dbReference>
<dbReference type="SMR" id="B1YUT9"/>
<dbReference type="KEGG" id="bac:BamMC406_2357"/>
<dbReference type="HOGENOM" id="CLU_047148_0_0_4"/>
<dbReference type="OrthoDB" id="9773087at2"/>
<dbReference type="UniPathway" id="UPA00028">
    <property type="reaction ID" value="UER00005"/>
</dbReference>
<dbReference type="Proteomes" id="UP000001680">
    <property type="component" value="Chromosome 1"/>
</dbReference>
<dbReference type="GO" id="GO:0005829">
    <property type="term" value="C:cytosol"/>
    <property type="evidence" value="ECO:0007669"/>
    <property type="project" value="TreeGrafter"/>
</dbReference>
<dbReference type="GO" id="GO:0005524">
    <property type="term" value="F:ATP binding"/>
    <property type="evidence" value="ECO:0007669"/>
    <property type="project" value="UniProtKB-KW"/>
</dbReference>
<dbReference type="GO" id="GO:0004592">
    <property type="term" value="F:pantoate-beta-alanine ligase activity"/>
    <property type="evidence" value="ECO:0007669"/>
    <property type="project" value="UniProtKB-UniRule"/>
</dbReference>
<dbReference type="GO" id="GO:0015940">
    <property type="term" value="P:pantothenate biosynthetic process"/>
    <property type="evidence" value="ECO:0007669"/>
    <property type="project" value="UniProtKB-UniRule"/>
</dbReference>
<dbReference type="CDD" id="cd00560">
    <property type="entry name" value="PanC"/>
    <property type="match status" value="1"/>
</dbReference>
<dbReference type="Gene3D" id="3.40.50.620">
    <property type="entry name" value="HUPs"/>
    <property type="match status" value="1"/>
</dbReference>
<dbReference type="Gene3D" id="3.30.1300.10">
    <property type="entry name" value="Pantoate-beta-alanine ligase, C-terminal domain"/>
    <property type="match status" value="1"/>
</dbReference>
<dbReference type="HAMAP" id="MF_00158">
    <property type="entry name" value="PanC"/>
    <property type="match status" value="1"/>
</dbReference>
<dbReference type="InterPro" id="IPR004821">
    <property type="entry name" value="Cyt_trans-like"/>
</dbReference>
<dbReference type="InterPro" id="IPR003721">
    <property type="entry name" value="Pantoate_ligase"/>
</dbReference>
<dbReference type="InterPro" id="IPR042176">
    <property type="entry name" value="Pantoate_ligase_C"/>
</dbReference>
<dbReference type="InterPro" id="IPR014729">
    <property type="entry name" value="Rossmann-like_a/b/a_fold"/>
</dbReference>
<dbReference type="NCBIfam" id="TIGR00125">
    <property type="entry name" value="cyt_tran_rel"/>
    <property type="match status" value="1"/>
</dbReference>
<dbReference type="NCBIfam" id="TIGR00018">
    <property type="entry name" value="panC"/>
    <property type="match status" value="1"/>
</dbReference>
<dbReference type="PANTHER" id="PTHR21299">
    <property type="entry name" value="CYTIDYLATE KINASE/PANTOATE-BETA-ALANINE LIGASE"/>
    <property type="match status" value="1"/>
</dbReference>
<dbReference type="PANTHER" id="PTHR21299:SF1">
    <property type="entry name" value="PANTOATE--BETA-ALANINE LIGASE"/>
    <property type="match status" value="1"/>
</dbReference>
<dbReference type="Pfam" id="PF02569">
    <property type="entry name" value="Pantoate_ligase"/>
    <property type="match status" value="1"/>
</dbReference>
<dbReference type="SUPFAM" id="SSF52374">
    <property type="entry name" value="Nucleotidylyl transferase"/>
    <property type="match status" value="1"/>
</dbReference>
<keyword id="KW-0067">ATP-binding</keyword>
<keyword id="KW-0963">Cytoplasm</keyword>
<keyword id="KW-0436">Ligase</keyword>
<keyword id="KW-0547">Nucleotide-binding</keyword>
<keyword id="KW-0566">Pantothenate biosynthesis</keyword>
<evidence type="ECO:0000255" key="1">
    <source>
        <dbReference type="HAMAP-Rule" id="MF_00158"/>
    </source>
</evidence>
<protein>
    <recommendedName>
        <fullName evidence="1">Pantothenate synthetase</fullName>
        <shortName evidence="1">PS</shortName>
        <ecNumber evidence="1">6.3.2.1</ecNumber>
    </recommendedName>
    <alternativeName>
        <fullName evidence="1">Pantoate--beta-alanine ligase</fullName>
    </alternativeName>
    <alternativeName>
        <fullName evidence="1">Pantoate-activating enzyme</fullName>
    </alternativeName>
</protein>
<reference key="1">
    <citation type="submission" date="2008-04" db="EMBL/GenBank/DDBJ databases">
        <title>Complete sequence of chromosome 1 of Burkholderia ambifaria MC40-6.</title>
        <authorList>
            <person name="Copeland A."/>
            <person name="Lucas S."/>
            <person name="Lapidus A."/>
            <person name="Glavina del Rio T."/>
            <person name="Dalin E."/>
            <person name="Tice H."/>
            <person name="Pitluck S."/>
            <person name="Chain P."/>
            <person name="Malfatti S."/>
            <person name="Shin M."/>
            <person name="Vergez L."/>
            <person name="Lang D."/>
            <person name="Schmutz J."/>
            <person name="Larimer F."/>
            <person name="Land M."/>
            <person name="Hauser L."/>
            <person name="Kyrpides N."/>
            <person name="Lykidis A."/>
            <person name="Ramette A."/>
            <person name="Konstantinidis K."/>
            <person name="Tiedje J."/>
            <person name="Richardson P."/>
        </authorList>
    </citation>
    <scope>NUCLEOTIDE SEQUENCE [LARGE SCALE GENOMIC DNA]</scope>
    <source>
        <strain>MC40-6</strain>
    </source>
</reference>
<gene>
    <name evidence="1" type="primary">panC</name>
    <name type="ordered locus">BamMC406_2357</name>
</gene>
<organism>
    <name type="scientific">Burkholderia ambifaria (strain MC40-6)</name>
    <dbReference type="NCBI Taxonomy" id="398577"/>
    <lineage>
        <taxon>Bacteria</taxon>
        <taxon>Pseudomonadati</taxon>
        <taxon>Pseudomonadota</taxon>
        <taxon>Betaproteobacteria</taxon>
        <taxon>Burkholderiales</taxon>
        <taxon>Burkholderiaceae</taxon>
        <taxon>Burkholderia</taxon>
        <taxon>Burkholderia cepacia complex</taxon>
    </lineage>
</organism>
<proteinExistence type="inferred from homology"/>